<reference key="1">
    <citation type="journal article" date="2001" name="Science">
        <title>Mechanisms of evolution in Rickettsia conorii and R. prowazekii.</title>
        <authorList>
            <person name="Ogata H."/>
            <person name="Audic S."/>
            <person name="Renesto-Audiffren P."/>
            <person name="Fournier P.-E."/>
            <person name="Barbe V."/>
            <person name="Samson D."/>
            <person name="Roux V."/>
            <person name="Cossart P."/>
            <person name="Weissenbach J."/>
            <person name="Claverie J.-M."/>
            <person name="Raoult D."/>
        </authorList>
    </citation>
    <scope>NUCLEOTIDE SEQUENCE [LARGE SCALE GENOMIC DNA]</scope>
    <source>
        <strain>ATCC VR-613 / Malish 7</strain>
    </source>
</reference>
<keyword id="KW-0067">ATP-binding</keyword>
<keyword id="KW-0143">Chaperone</keyword>
<keyword id="KW-0479">Metal-binding</keyword>
<keyword id="KW-0547">Nucleotide-binding</keyword>
<keyword id="KW-0862">Zinc</keyword>
<accession>Q92GQ4</accession>
<organism>
    <name type="scientific">Rickettsia conorii (strain ATCC VR-613 / Malish 7)</name>
    <dbReference type="NCBI Taxonomy" id="272944"/>
    <lineage>
        <taxon>Bacteria</taxon>
        <taxon>Pseudomonadati</taxon>
        <taxon>Pseudomonadota</taxon>
        <taxon>Alphaproteobacteria</taxon>
        <taxon>Rickettsiales</taxon>
        <taxon>Rickettsiaceae</taxon>
        <taxon>Rickettsieae</taxon>
        <taxon>Rickettsia</taxon>
        <taxon>spotted fever group</taxon>
    </lineage>
</organism>
<sequence length="425" mass="46654">MVVEADKKALICSFCSKKQHEVKKLIAGPAVFICDECIDLCTDIMKEENKVALKQITSSIPTPQKICGILNDYVVGQDQAKKILAVAVYNHYKRLEYVQSGNNDVELNKSNILLIGPTGSGKTLLAQTLAKILDVPFTMADATSLTEAGYVGEDVENILLRLLIASEFNIAKAQKGIIYIDEVDKIARKSENPSITRDVSGEGVQQALLKIMEGTVASVPPQGGRKHPQQDFVQLDTSNILFICGGAFMGIDSIITSRTNHSSIGFAANVNIDKEKNNSEILKSLEIEDLTKFGLIPEFIGRLPIVTTLDELDKEALITILTKPKNAIVKQYQKQFELDDAELVIDYSALETIAEKALAKKTGARGLRSILEHLLLDSMYKVAELKKQRVTITKEVVNGLVEPIMTSLISTKSNKKQPIITDIPA</sequence>
<gene>
    <name evidence="1" type="primary">clpX</name>
    <name type="ordered locus">RC1068</name>
</gene>
<proteinExistence type="inferred from homology"/>
<evidence type="ECO:0000255" key="1">
    <source>
        <dbReference type="HAMAP-Rule" id="MF_00175"/>
    </source>
</evidence>
<evidence type="ECO:0000255" key="2">
    <source>
        <dbReference type="PROSITE-ProRule" id="PRU01250"/>
    </source>
</evidence>
<protein>
    <recommendedName>
        <fullName evidence="1">ATP-dependent Clp protease ATP-binding subunit ClpX</fullName>
    </recommendedName>
</protein>
<dbReference type="EMBL" id="AE006914">
    <property type="protein sequence ID" value="AAL03606.1"/>
    <property type="molecule type" value="Genomic_DNA"/>
</dbReference>
<dbReference type="PIR" id="D97833">
    <property type="entry name" value="D97833"/>
</dbReference>
<dbReference type="RefSeq" id="WP_010977646.1">
    <property type="nucleotide sequence ID" value="NC_003103.1"/>
</dbReference>
<dbReference type="SMR" id="Q92GQ4"/>
<dbReference type="GeneID" id="928218"/>
<dbReference type="KEGG" id="rco:RC1068"/>
<dbReference type="PATRIC" id="fig|272944.4.peg.1224"/>
<dbReference type="HOGENOM" id="CLU_014218_8_2_5"/>
<dbReference type="Proteomes" id="UP000000816">
    <property type="component" value="Chromosome"/>
</dbReference>
<dbReference type="GO" id="GO:0009376">
    <property type="term" value="C:HslUV protease complex"/>
    <property type="evidence" value="ECO:0007669"/>
    <property type="project" value="TreeGrafter"/>
</dbReference>
<dbReference type="GO" id="GO:0005524">
    <property type="term" value="F:ATP binding"/>
    <property type="evidence" value="ECO:0007669"/>
    <property type="project" value="UniProtKB-UniRule"/>
</dbReference>
<dbReference type="GO" id="GO:0016887">
    <property type="term" value="F:ATP hydrolysis activity"/>
    <property type="evidence" value="ECO:0007669"/>
    <property type="project" value="InterPro"/>
</dbReference>
<dbReference type="GO" id="GO:0140662">
    <property type="term" value="F:ATP-dependent protein folding chaperone"/>
    <property type="evidence" value="ECO:0007669"/>
    <property type="project" value="InterPro"/>
</dbReference>
<dbReference type="GO" id="GO:0046983">
    <property type="term" value="F:protein dimerization activity"/>
    <property type="evidence" value="ECO:0007669"/>
    <property type="project" value="InterPro"/>
</dbReference>
<dbReference type="GO" id="GO:0051082">
    <property type="term" value="F:unfolded protein binding"/>
    <property type="evidence" value="ECO:0007669"/>
    <property type="project" value="UniProtKB-UniRule"/>
</dbReference>
<dbReference type="GO" id="GO:0008270">
    <property type="term" value="F:zinc ion binding"/>
    <property type="evidence" value="ECO:0007669"/>
    <property type="project" value="InterPro"/>
</dbReference>
<dbReference type="GO" id="GO:0051301">
    <property type="term" value="P:cell division"/>
    <property type="evidence" value="ECO:0007669"/>
    <property type="project" value="TreeGrafter"/>
</dbReference>
<dbReference type="GO" id="GO:0051603">
    <property type="term" value="P:proteolysis involved in protein catabolic process"/>
    <property type="evidence" value="ECO:0007669"/>
    <property type="project" value="TreeGrafter"/>
</dbReference>
<dbReference type="CDD" id="cd19497">
    <property type="entry name" value="RecA-like_ClpX"/>
    <property type="match status" value="1"/>
</dbReference>
<dbReference type="FunFam" id="1.10.8.60:FF:000002">
    <property type="entry name" value="ATP-dependent Clp protease ATP-binding subunit ClpX"/>
    <property type="match status" value="1"/>
</dbReference>
<dbReference type="FunFam" id="3.40.50.300:FF:000005">
    <property type="entry name" value="ATP-dependent Clp protease ATP-binding subunit ClpX"/>
    <property type="match status" value="1"/>
</dbReference>
<dbReference type="Gene3D" id="1.10.8.60">
    <property type="match status" value="1"/>
</dbReference>
<dbReference type="Gene3D" id="6.20.220.10">
    <property type="entry name" value="ClpX chaperone, C4-type zinc finger domain"/>
    <property type="match status" value="1"/>
</dbReference>
<dbReference type="Gene3D" id="3.40.50.300">
    <property type="entry name" value="P-loop containing nucleotide triphosphate hydrolases"/>
    <property type="match status" value="1"/>
</dbReference>
<dbReference type="HAMAP" id="MF_00175">
    <property type="entry name" value="ClpX"/>
    <property type="match status" value="1"/>
</dbReference>
<dbReference type="InterPro" id="IPR003593">
    <property type="entry name" value="AAA+_ATPase"/>
</dbReference>
<dbReference type="InterPro" id="IPR050052">
    <property type="entry name" value="ATP-dep_Clp_protease_ClpX"/>
</dbReference>
<dbReference type="InterPro" id="IPR003959">
    <property type="entry name" value="ATPase_AAA_core"/>
</dbReference>
<dbReference type="InterPro" id="IPR019489">
    <property type="entry name" value="Clp_ATPase_C"/>
</dbReference>
<dbReference type="InterPro" id="IPR004487">
    <property type="entry name" value="Clp_protease_ATP-bd_su_ClpX"/>
</dbReference>
<dbReference type="InterPro" id="IPR046425">
    <property type="entry name" value="ClpX_bact"/>
</dbReference>
<dbReference type="InterPro" id="IPR027417">
    <property type="entry name" value="P-loop_NTPase"/>
</dbReference>
<dbReference type="InterPro" id="IPR010603">
    <property type="entry name" value="Znf_CppX_C4"/>
</dbReference>
<dbReference type="InterPro" id="IPR038366">
    <property type="entry name" value="Znf_CppX_C4_sf"/>
</dbReference>
<dbReference type="NCBIfam" id="TIGR00382">
    <property type="entry name" value="clpX"/>
    <property type="match status" value="1"/>
</dbReference>
<dbReference type="NCBIfam" id="NF003745">
    <property type="entry name" value="PRK05342.1"/>
    <property type="match status" value="1"/>
</dbReference>
<dbReference type="PANTHER" id="PTHR48102:SF7">
    <property type="entry name" value="ATP-DEPENDENT CLP PROTEASE ATP-BINDING SUBUNIT CLPX-LIKE, MITOCHONDRIAL"/>
    <property type="match status" value="1"/>
</dbReference>
<dbReference type="PANTHER" id="PTHR48102">
    <property type="entry name" value="ATP-DEPENDENT CLP PROTEASE ATP-BINDING SUBUNIT CLPX-LIKE, MITOCHONDRIAL-RELATED"/>
    <property type="match status" value="1"/>
</dbReference>
<dbReference type="Pfam" id="PF07724">
    <property type="entry name" value="AAA_2"/>
    <property type="match status" value="1"/>
</dbReference>
<dbReference type="Pfam" id="PF10431">
    <property type="entry name" value="ClpB_D2-small"/>
    <property type="match status" value="1"/>
</dbReference>
<dbReference type="Pfam" id="PF06689">
    <property type="entry name" value="zf-C4_ClpX"/>
    <property type="match status" value="1"/>
</dbReference>
<dbReference type="SMART" id="SM00382">
    <property type="entry name" value="AAA"/>
    <property type="match status" value="1"/>
</dbReference>
<dbReference type="SMART" id="SM01086">
    <property type="entry name" value="ClpB_D2-small"/>
    <property type="match status" value="1"/>
</dbReference>
<dbReference type="SMART" id="SM00994">
    <property type="entry name" value="zf-C4_ClpX"/>
    <property type="match status" value="1"/>
</dbReference>
<dbReference type="SUPFAM" id="SSF57716">
    <property type="entry name" value="Glucocorticoid receptor-like (DNA-binding domain)"/>
    <property type="match status" value="1"/>
</dbReference>
<dbReference type="SUPFAM" id="SSF52540">
    <property type="entry name" value="P-loop containing nucleoside triphosphate hydrolases"/>
    <property type="match status" value="1"/>
</dbReference>
<dbReference type="PROSITE" id="PS51902">
    <property type="entry name" value="CLPX_ZB"/>
    <property type="match status" value="1"/>
</dbReference>
<comment type="function">
    <text evidence="1">ATP-dependent specificity component of the Clp protease. It directs the protease to specific substrates. Can perform chaperone functions in the absence of ClpP.</text>
</comment>
<comment type="subunit">
    <text evidence="1">Component of the ClpX-ClpP complex. Forms a hexameric ring that, in the presence of ATP, binds to fourteen ClpP subunits assembled into a disk-like structure with a central cavity, resembling the structure of eukaryotic proteasomes.</text>
</comment>
<comment type="similarity">
    <text evidence="1">Belongs to the ClpX chaperone family.</text>
</comment>
<feature type="chain" id="PRO_0000160412" description="ATP-dependent Clp protease ATP-binding subunit ClpX">
    <location>
        <begin position="1"/>
        <end position="425"/>
    </location>
</feature>
<feature type="domain" description="ClpX-type ZB" evidence="2">
    <location>
        <begin position="1"/>
        <end position="53"/>
    </location>
</feature>
<feature type="binding site" evidence="2">
    <location>
        <position position="12"/>
    </location>
    <ligand>
        <name>Zn(2+)</name>
        <dbReference type="ChEBI" id="CHEBI:29105"/>
    </ligand>
</feature>
<feature type="binding site" evidence="2">
    <location>
        <position position="15"/>
    </location>
    <ligand>
        <name>Zn(2+)</name>
        <dbReference type="ChEBI" id="CHEBI:29105"/>
    </ligand>
</feature>
<feature type="binding site" evidence="2">
    <location>
        <position position="34"/>
    </location>
    <ligand>
        <name>Zn(2+)</name>
        <dbReference type="ChEBI" id="CHEBI:29105"/>
    </ligand>
</feature>
<feature type="binding site" evidence="2">
    <location>
        <position position="37"/>
    </location>
    <ligand>
        <name>Zn(2+)</name>
        <dbReference type="ChEBI" id="CHEBI:29105"/>
    </ligand>
</feature>
<feature type="binding site" evidence="1">
    <location>
        <begin position="117"/>
        <end position="124"/>
    </location>
    <ligand>
        <name>ATP</name>
        <dbReference type="ChEBI" id="CHEBI:30616"/>
    </ligand>
</feature>
<name>CLPX_RICCN</name>